<feature type="signal peptide" evidence="2">
    <location>
        <begin position="1"/>
        <end position="17"/>
    </location>
</feature>
<feature type="chain" id="PRO_0000417976" description="Putative chitinase 2" evidence="2">
    <location>
        <begin position="18"/>
        <end position="466"/>
    </location>
</feature>
<feature type="domain" description="GH18" evidence="3">
    <location>
        <begin position="20"/>
        <end position="380"/>
    </location>
</feature>
<feature type="coiled-coil region" evidence="2">
    <location>
        <begin position="395"/>
        <end position="447"/>
    </location>
</feature>
<feature type="active site" description="Proton donor" evidence="3">
    <location>
        <position position="141"/>
    </location>
</feature>
<feature type="disulfide bond" evidence="3">
    <location>
        <begin position="24"/>
        <end position="49"/>
    </location>
</feature>
<evidence type="ECO:0000250" key="1">
    <source>
        <dbReference type="UniProtKB" id="P86955"/>
    </source>
</evidence>
<evidence type="ECO:0000255" key="2"/>
<evidence type="ECO:0000255" key="3">
    <source>
        <dbReference type="PROSITE-ProRule" id="PRU01258"/>
    </source>
</evidence>
<evidence type="ECO:0000269" key="4">
    <source>
    </source>
</evidence>
<evidence type="ECO:0000305" key="5"/>
<organism>
    <name type="scientific">Margaritifera margaritifera</name>
    <name type="common">Freshwater pearl mussel</name>
    <dbReference type="NCBI Taxonomy" id="102329"/>
    <lineage>
        <taxon>Eukaryota</taxon>
        <taxon>Metazoa</taxon>
        <taxon>Spiralia</taxon>
        <taxon>Lophotrochozoa</taxon>
        <taxon>Mollusca</taxon>
        <taxon>Bivalvia</taxon>
        <taxon>Autobranchia</taxon>
        <taxon>Pteriomorphia</taxon>
        <taxon>Pterioida</taxon>
        <taxon>Pterioidea</taxon>
        <taxon>Pteriidae</taxon>
        <taxon>Pinctada</taxon>
    </lineage>
</organism>
<comment type="catalytic activity">
    <reaction evidence="2">
        <text>Random endo-hydrolysis of N-acetyl-beta-D-glucosaminide (1-&gt;4)-beta-linkages in chitin and chitodextrins.</text>
        <dbReference type="EC" id="3.2.1.14"/>
    </reaction>
</comment>
<comment type="subcellular location">
    <subcellularLocation>
        <location evidence="4">Secreted</location>
    </subcellularLocation>
</comment>
<comment type="tissue specificity">
    <text evidence="4">Prismatic layer of shell (at protein level). Expressed primarily in the mantle with highest level in the mantle edge and lower level in the mantle pallium.</text>
</comment>
<comment type="similarity">
    <text evidence="2">Belongs to the glycosyl hydrolase 18 family.</text>
</comment>
<proteinExistence type="evidence at protein level"/>
<dbReference type="EC" id="3.2.1.14"/>
<dbReference type="EMBL" id="HE610382">
    <property type="protein sequence ID" value="CCE46156.1"/>
    <property type="molecule type" value="mRNA"/>
</dbReference>
<dbReference type="SMR" id="H2A0L5"/>
<dbReference type="CAZy" id="GH18">
    <property type="family name" value="Glycoside Hydrolase Family 18"/>
</dbReference>
<dbReference type="GO" id="GO:0005576">
    <property type="term" value="C:extracellular region"/>
    <property type="evidence" value="ECO:0007669"/>
    <property type="project" value="UniProtKB-SubCell"/>
</dbReference>
<dbReference type="GO" id="GO:0008061">
    <property type="term" value="F:chitin binding"/>
    <property type="evidence" value="ECO:0007669"/>
    <property type="project" value="InterPro"/>
</dbReference>
<dbReference type="GO" id="GO:0008843">
    <property type="term" value="F:endochitinase activity"/>
    <property type="evidence" value="ECO:0007669"/>
    <property type="project" value="UniProtKB-EC"/>
</dbReference>
<dbReference type="GO" id="GO:0005975">
    <property type="term" value="P:carbohydrate metabolic process"/>
    <property type="evidence" value="ECO:0007669"/>
    <property type="project" value="InterPro"/>
</dbReference>
<dbReference type="GO" id="GO:0006032">
    <property type="term" value="P:chitin catabolic process"/>
    <property type="evidence" value="ECO:0007669"/>
    <property type="project" value="TreeGrafter"/>
</dbReference>
<dbReference type="CDD" id="cd14688">
    <property type="entry name" value="bZIP_YAP"/>
    <property type="match status" value="1"/>
</dbReference>
<dbReference type="Gene3D" id="3.10.50.10">
    <property type="match status" value="1"/>
</dbReference>
<dbReference type="Gene3D" id="3.20.20.80">
    <property type="entry name" value="Glycosidases"/>
    <property type="match status" value="1"/>
</dbReference>
<dbReference type="InterPro" id="IPR011583">
    <property type="entry name" value="Chitinase_II/V-like_cat"/>
</dbReference>
<dbReference type="InterPro" id="IPR029070">
    <property type="entry name" value="Chitinase_insertion_sf"/>
</dbReference>
<dbReference type="InterPro" id="IPR001223">
    <property type="entry name" value="Glyco_hydro18_cat"/>
</dbReference>
<dbReference type="InterPro" id="IPR001579">
    <property type="entry name" value="Glyco_hydro_18_chit_AS"/>
</dbReference>
<dbReference type="InterPro" id="IPR017853">
    <property type="entry name" value="Glycoside_hydrolase_SF"/>
</dbReference>
<dbReference type="InterPro" id="IPR050314">
    <property type="entry name" value="Glycosyl_Hydrlase_18"/>
</dbReference>
<dbReference type="PANTHER" id="PTHR11177">
    <property type="entry name" value="CHITINASE"/>
    <property type="match status" value="1"/>
</dbReference>
<dbReference type="PANTHER" id="PTHR11177:SF390">
    <property type="entry name" value="CHITINASE 11"/>
    <property type="match status" value="1"/>
</dbReference>
<dbReference type="Pfam" id="PF00704">
    <property type="entry name" value="Glyco_hydro_18"/>
    <property type="match status" value="1"/>
</dbReference>
<dbReference type="SMART" id="SM00636">
    <property type="entry name" value="Glyco_18"/>
    <property type="match status" value="1"/>
</dbReference>
<dbReference type="SUPFAM" id="SSF51445">
    <property type="entry name" value="(Trans)glycosidases"/>
    <property type="match status" value="1"/>
</dbReference>
<dbReference type="SUPFAM" id="SSF54556">
    <property type="entry name" value="Chitinase insertion domain"/>
    <property type="match status" value="1"/>
</dbReference>
<dbReference type="PROSITE" id="PS01095">
    <property type="entry name" value="GH18_1"/>
    <property type="match status" value="1"/>
</dbReference>
<dbReference type="PROSITE" id="PS51910">
    <property type="entry name" value="GH18_2"/>
    <property type="match status" value="1"/>
</dbReference>
<keyword id="KW-0175">Coiled coil</keyword>
<keyword id="KW-0903">Direct protein sequencing</keyword>
<keyword id="KW-1015">Disulfide bond</keyword>
<keyword id="KW-0326">Glycosidase</keyword>
<keyword id="KW-0378">Hydrolase</keyword>
<keyword id="KW-0964">Secreted</keyword>
<keyword id="KW-0732">Signal</keyword>
<sequence>MYLTIWLVPLLAVGTWGQKFNRFCHYNSWALSRNPQHGLVPEDIDPFLCTHMILGFAEIDESGLRLKDPNHYQQQYLYQRIVRLRRINPRLNMILSVGGWDKSQEGYSKLVSSRENIIFFTKWIITYLRRHDFDGLDLDWEYPTFKGSPMVDKKKFVDLVENLAYEFDIEEIPDIKWKLTLTWTADPLESVRTSAYDIKGIASKVHYVNLKMYDFHGHWDDPLRVNHHSPLTSSNSPRNVNELAKTWVKAGVRIEKLILGIPFFGRSFTLKTANMSAPGSPAVGPGSDFGDGIPIHNLCHIIRGGTKELYLPEKKVPYIVSGSEWIGYDNPRSVMEKAQLVFNNALAGVMIYSLDMDDHHGTCGKKWPMMMAVIHGLNAYMEYIDSKHKSLELTYNKKILRARVSLRNYRRRNQQGKVAEMEQRIRNLEQELQQSMGNMAYERQQAQAMLNRGVSLPPIEQQSWSW</sequence>
<name>CHI2_PINMG</name>
<protein>
    <recommendedName>
        <fullName evidence="1">Putative chitinase 2</fullName>
        <ecNumber>3.2.1.14</ecNumber>
    </recommendedName>
    <alternativeName>
        <fullName evidence="1">Chitinase-like protein 3</fullName>
        <shortName>Clp3</shortName>
    </alternativeName>
</protein>
<accession>H2A0L5</accession>
<reference evidence="5" key="1">
    <citation type="journal article" date="2010" name="BMC Genomics">
        <title>Transcriptome and proteome analysis of Pinctada margaritifera calcifying mantle and shell: focus on biomineralization.</title>
        <authorList>
            <person name="Joubert C."/>
            <person name="Piquemal D."/>
            <person name="Marie B."/>
            <person name="Manchon L."/>
            <person name="Pierrat F."/>
            <person name="Zanella-Cleon I."/>
            <person name="Cochennec-Laureau N."/>
            <person name="Gueguen Y."/>
            <person name="Montagnani C."/>
        </authorList>
    </citation>
    <scope>NUCLEOTIDE SEQUENCE [MRNA]</scope>
    <scope>IDENTIFICATION</scope>
    <source>
        <tissue>Mantle</tissue>
    </source>
</reference>
<reference key="2">
    <citation type="journal article" date="2012" name="Proc. Natl. Acad. Sci. U.S.A.">
        <title>Different secretory repertoires control the biomineralization processes of prism and nacre deposition of the pearl oyster shell.</title>
        <authorList>
            <person name="Marie B."/>
            <person name="Joubert C."/>
            <person name="Tayale A."/>
            <person name="Zanella-Cleon I."/>
            <person name="Belliard C."/>
            <person name="Piquemal D."/>
            <person name="Cochennec-Laureau N."/>
            <person name="Marin F."/>
            <person name="Gueguen Y."/>
            <person name="Montagnani C."/>
        </authorList>
    </citation>
    <scope>PROTEIN SEQUENCE OF 179-192; 205-211; 257-266; 390-397 AND 444-452</scope>
    <scope>SUBCELLULAR LOCATION</scope>
    <scope>TISSUE SPECIFICITY</scope>
    <source>
        <tissue>Shell</tissue>
    </source>
</reference>